<dbReference type="EC" id="3.1.3.5" evidence="1"/>
<dbReference type="EMBL" id="CP000529">
    <property type="protein sequence ID" value="ABM37882.1"/>
    <property type="molecule type" value="Genomic_DNA"/>
</dbReference>
<dbReference type="RefSeq" id="WP_011801959.1">
    <property type="nucleotide sequence ID" value="NC_008781.1"/>
</dbReference>
<dbReference type="SMR" id="A1VQF4"/>
<dbReference type="STRING" id="365044.Pnap_2579"/>
<dbReference type="KEGG" id="pna:Pnap_2579"/>
<dbReference type="eggNOG" id="COG0496">
    <property type="taxonomic scope" value="Bacteria"/>
</dbReference>
<dbReference type="HOGENOM" id="CLU_045192_1_2_4"/>
<dbReference type="OrthoDB" id="9780815at2"/>
<dbReference type="Proteomes" id="UP000000644">
    <property type="component" value="Chromosome"/>
</dbReference>
<dbReference type="GO" id="GO:0005737">
    <property type="term" value="C:cytoplasm"/>
    <property type="evidence" value="ECO:0007669"/>
    <property type="project" value="UniProtKB-SubCell"/>
</dbReference>
<dbReference type="GO" id="GO:0008254">
    <property type="term" value="F:3'-nucleotidase activity"/>
    <property type="evidence" value="ECO:0007669"/>
    <property type="project" value="TreeGrafter"/>
</dbReference>
<dbReference type="GO" id="GO:0008253">
    <property type="term" value="F:5'-nucleotidase activity"/>
    <property type="evidence" value="ECO:0007669"/>
    <property type="project" value="UniProtKB-UniRule"/>
</dbReference>
<dbReference type="GO" id="GO:0004309">
    <property type="term" value="F:exopolyphosphatase activity"/>
    <property type="evidence" value="ECO:0007669"/>
    <property type="project" value="TreeGrafter"/>
</dbReference>
<dbReference type="GO" id="GO:0046872">
    <property type="term" value="F:metal ion binding"/>
    <property type="evidence" value="ECO:0007669"/>
    <property type="project" value="UniProtKB-UniRule"/>
</dbReference>
<dbReference type="GO" id="GO:0000166">
    <property type="term" value="F:nucleotide binding"/>
    <property type="evidence" value="ECO:0007669"/>
    <property type="project" value="UniProtKB-KW"/>
</dbReference>
<dbReference type="FunFam" id="3.40.1210.10:FF:000001">
    <property type="entry name" value="5'/3'-nucleotidase SurE"/>
    <property type="match status" value="1"/>
</dbReference>
<dbReference type="Gene3D" id="3.40.1210.10">
    <property type="entry name" value="Survival protein SurE-like phosphatase/nucleotidase"/>
    <property type="match status" value="1"/>
</dbReference>
<dbReference type="HAMAP" id="MF_00060">
    <property type="entry name" value="SurE"/>
    <property type="match status" value="1"/>
</dbReference>
<dbReference type="InterPro" id="IPR030048">
    <property type="entry name" value="SurE"/>
</dbReference>
<dbReference type="InterPro" id="IPR002828">
    <property type="entry name" value="SurE-like_Pase/nucleotidase"/>
</dbReference>
<dbReference type="InterPro" id="IPR036523">
    <property type="entry name" value="SurE-like_sf"/>
</dbReference>
<dbReference type="NCBIfam" id="NF001489">
    <property type="entry name" value="PRK00346.1-3"/>
    <property type="match status" value="1"/>
</dbReference>
<dbReference type="NCBIfam" id="NF001490">
    <property type="entry name" value="PRK00346.1-4"/>
    <property type="match status" value="1"/>
</dbReference>
<dbReference type="NCBIfam" id="TIGR00087">
    <property type="entry name" value="surE"/>
    <property type="match status" value="1"/>
</dbReference>
<dbReference type="PANTHER" id="PTHR30457">
    <property type="entry name" value="5'-NUCLEOTIDASE SURE"/>
    <property type="match status" value="1"/>
</dbReference>
<dbReference type="PANTHER" id="PTHR30457:SF12">
    <property type="entry name" value="5'_3'-NUCLEOTIDASE SURE"/>
    <property type="match status" value="1"/>
</dbReference>
<dbReference type="Pfam" id="PF01975">
    <property type="entry name" value="SurE"/>
    <property type="match status" value="1"/>
</dbReference>
<dbReference type="SUPFAM" id="SSF64167">
    <property type="entry name" value="SurE-like"/>
    <property type="match status" value="1"/>
</dbReference>
<reference key="1">
    <citation type="journal article" date="2009" name="Environ. Microbiol.">
        <title>The genome of Polaromonas naphthalenivorans strain CJ2, isolated from coal tar-contaminated sediment, reveals physiological and metabolic versatility and evolution through extensive horizontal gene transfer.</title>
        <authorList>
            <person name="Yagi J.M."/>
            <person name="Sims D."/>
            <person name="Brettin T."/>
            <person name="Bruce D."/>
            <person name="Madsen E.L."/>
        </authorList>
    </citation>
    <scope>NUCLEOTIDE SEQUENCE [LARGE SCALE GENOMIC DNA]</scope>
    <source>
        <strain>CJ2</strain>
    </source>
</reference>
<comment type="function">
    <text evidence="1">Nucleotidase that shows phosphatase activity on nucleoside 5'-monophosphates.</text>
</comment>
<comment type="catalytic activity">
    <reaction evidence="1">
        <text>a ribonucleoside 5'-phosphate + H2O = a ribonucleoside + phosphate</text>
        <dbReference type="Rhea" id="RHEA:12484"/>
        <dbReference type="ChEBI" id="CHEBI:15377"/>
        <dbReference type="ChEBI" id="CHEBI:18254"/>
        <dbReference type="ChEBI" id="CHEBI:43474"/>
        <dbReference type="ChEBI" id="CHEBI:58043"/>
        <dbReference type="EC" id="3.1.3.5"/>
    </reaction>
</comment>
<comment type="cofactor">
    <cofactor evidence="1">
        <name>a divalent metal cation</name>
        <dbReference type="ChEBI" id="CHEBI:60240"/>
    </cofactor>
    <text evidence="1">Binds 1 divalent metal cation per subunit.</text>
</comment>
<comment type="subcellular location">
    <subcellularLocation>
        <location evidence="1">Cytoplasm</location>
    </subcellularLocation>
</comment>
<comment type="similarity">
    <text evidence="1">Belongs to the SurE nucleotidase family.</text>
</comment>
<feature type="chain" id="PRO_1000007759" description="5'-nucleotidase SurE">
    <location>
        <begin position="1"/>
        <end position="261"/>
    </location>
</feature>
<feature type="binding site" evidence="1">
    <location>
        <position position="8"/>
    </location>
    <ligand>
        <name>a divalent metal cation</name>
        <dbReference type="ChEBI" id="CHEBI:60240"/>
    </ligand>
</feature>
<feature type="binding site" evidence="1">
    <location>
        <position position="9"/>
    </location>
    <ligand>
        <name>a divalent metal cation</name>
        <dbReference type="ChEBI" id="CHEBI:60240"/>
    </ligand>
</feature>
<feature type="binding site" evidence="1">
    <location>
        <position position="39"/>
    </location>
    <ligand>
        <name>a divalent metal cation</name>
        <dbReference type="ChEBI" id="CHEBI:60240"/>
    </ligand>
</feature>
<feature type="binding site" evidence="1">
    <location>
        <position position="91"/>
    </location>
    <ligand>
        <name>a divalent metal cation</name>
        <dbReference type="ChEBI" id="CHEBI:60240"/>
    </ligand>
</feature>
<proteinExistence type="inferred from homology"/>
<keyword id="KW-0963">Cytoplasm</keyword>
<keyword id="KW-0378">Hydrolase</keyword>
<keyword id="KW-0479">Metal-binding</keyword>
<keyword id="KW-0547">Nucleotide-binding</keyword>
<keyword id="KW-1185">Reference proteome</keyword>
<name>SURE_POLNA</name>
<evidence type="ECO:0000255" key="1">
    <source>
        <dbReference type="HAMAP-Rule" id="MF_00060"/>
    </source>
</evidence>
<organism>
    <name type="scientific">Polaromonas naphthalenivorans (strain CJ2)</name>
    <dbReference type="NCBI Taxonomy" id="365044"/>
    <lineage>
        <taxon>Bacteria</taxon>
        <taxon>Pseudomonadati</taxon>
        <taxon>Pseudomonadota</taxon>
        <taxon>Betaproteobacteria</taxon>
        <taxon>Burkholderiales</taxon>
        <taxon>Comamonadaceae</taxon>
        <taxon>Polaromonas</taxon>
    </lineage>
</organism>
<sequence length="261" mass="27988">MKILICNDDGYQASGIVALYEALKTIADVEVVAPEQNNSAKSNALTLHSPMYVQTAANGFRYINGTPADCVHIALTGLLGYRPDLVVSGINNGANMGDDTIYSGTVGAAMEGYLFGIPAIAFSQTEKGWTHIDVAAQQARNLIKQLIPSLEAVAEGAQPSVPPWLLNVNIPNLPAGQVEGFKVCRLGRRHAAERVIVQTSPRGESMYWIGGAGPAKEAGEGTDFHATTQGYVSITPLHVDLTDHERLPYWAQTAARLTHKH</sequence>
<protein>
    <recommendedName>
        <fullName evidence="1">5'-nucleotidase SurE</fullName>
        <ecNumber evidence="1">3.1.3.5</ecNumber>
    </recommendedName>
    <alternativeName>
        <fullName evidence="1">Nucleoside 5'-monophosphate phosphohydrolase</fullName>
    </alternativeName>
</protein>
<gene>
    <name evidence="1" type="primary">surE</name>
    <name type="ordered locus">Pnap_2579</name>
</gene>
<accession>A1VQF4</accession>